<feature type="chain" id="PRO_1000073631" description="Pyridoxal 5'-phosphate synthase subunit PdxT">
    <location>
        <begin position="1"/>
        <end position="186"/>
    </location>
</feature>
<feature type="active site" description="Nucleophile" evidence="1">
    <location>
        <position position="75"/>
    </location>
</feature>
<feature type="active site" description="Charge relay system" evidence="1">
    <location>
        <position position="165"/>
    </location>
</feature>
<feature type="active site" description="Charge relay system" evidence="1">
    <location>
        <position position="167"/>
    </location>
</feature>
<feature type="binding site" evidence="1">
    <location>
        <begin position="46"/>
        <end position="48"/>
    </location>
    <ligand>
        <name>L-glutamine</name>
        <dbReference type="ChEBI" id="CHEBI:58359"/>
    </ligand>
</feature>
<feature type="binding site" evidence="1">
    <location>
        <position position="101"/>
    </location>
    <ligand>
        <name>L-glutamine</name>
        <dbReference type="ChEBI" id="CHEBI:58359"/>
    </ligand>
</feature>
<feature type="binding site" evidence="1">
    <location>
        <begin position="129"/>
        <end position="130"/>
    </location>
    <ligand>
        <name>L-glutamine</name>
        <dbReference type="ChEBI" id="CHEBI:58359"/>
    </ligand>
</feature>
<organism>
    <name type="scientific">Staphylococcus aureus (strain Newman)</name>
    <dbReference type="NCBI Taxonomy" id="426430"/>
    <lineage>
        <taxon>Bacteria</taxon>
        <taxon>Bacillati</taxon>
        <taxon>Bacillota</taxon>
        <taxon>Bacilli</taxon>
        <taxon>Bacillales</taxon>
        <taxon>Staphylococcaceae</taxon>
        <taxon>Staphylococcus</taxon>
    </lineage>
</organism>
<reference key="1">
    <citation type="journal article" date="2008" name="J. Bacteriol.">
        <title>Genome sequence of Staphylococcus aureus strain Newman and comparative analysis of staphylococcal genomes: polymorphism and evolution of two major pathogenicity islands.</title>
        <authorList>
            <person name="Baba T."/>
            <person name="Bae T."/>
            <person name="Schneewind O."/>
            <person name="Takeuchi F."/>
            <person name="Hiramatsu K."/>
        </authorList>
    </citation>
    <scope>NUCLEOTIDE SEQUENCE [LARGE SCALE GENOMIC DNA]</scope>
    <source>
        <strain>Newman</strain>
    </source>
</reference>
<comment type="function">
    <text evidence="1">Catalyzes the hydrolysis of glutamine to glutamate and ammonia as part of the biosynthesis of pyridoxal 5'-phosphate. The resulting ammonia molecule is channeled to the active site of PdxS.</text>
</comment>
<comment type="catalytic activity">
    <reaction evidence="1">
        <text>aldehydo-D-ribose 5-phosphate + D-glyceraldehyde 3-phosphate + L-glutamine = pyridoxal 5'-phosphate + L-glutamate + phosphate + 3 H2O + H(+)</text>
        <dbReference type="Rhea" id="RHEA:31507"/>
        <dbReference type="ChEBI" id="CHEBI:15377"/>
        <dbReference type="ChEBI" id="CHEBI:15378"/>
        <dbReference type="ChEBI" id="CHEBI:29985"/>
        <dbReference type="ChEBI" id="CHEBI:43474"/>
        <dbReference type="ChEBI" id="CHEBI:58273"/>
        <dbReference type="ChEBI" id="CHEBI:58359"/>
        <dbReference type="ChEBI" id="CHEBI:59776"/>
        <dbReference type="ChEBI" id="CHEBI:597326"/>
        <dbReference type="EC" id="4.3.3.6"/>
    </reaction>
</comment>
<comment type="catalytic activity">
    <reaction evidence="1">
        <text>L-glutamine + H2O = L-glutamate + NH4(+)</text>
        <dbReference type="Rhea" id="RHEA:15889"/>
        <dbReference type="ChEBI" id="CHEBI:15377"/>
        <dbReference type="ChEBI" id="CHEBI:28938"/>
        <dbReference type="ChEBI" id="CHEBI:29985"/>
        <dbReference type="ChEBI" id="CHEBI:58359"/>
        <dbReference type="EC" id="3.5.1.2"/>
    </reaction>
</comment>
<comment type="pathway">
    <text evidence="1">Cofactor biosynthesis; pyridoxal 5'-phosphate biosynthesis.</text>
</comment>
<comment type="subunit">
    <text evidence="1">In the presence of PdxS, forms a dodecamer of heterodimers. Only shows activity in the heterodimer.</text>
</comment>
<comment type="similarity">
    <text evidence="1">Belongs to the glutaminase PdxT/SNO family.</text>
</comment>
<proteinExistence type="inferred from homology"/>
<protein>
    <recommendedName>
        <fullName evidence="1">Pyridoxal 5'-phosphate synthase subunit PdxT</fullName>
        <ecNumber evidence="1">4.3.3.6</ecNumber>
    </recommendedName>
    <alternativeName>
        <fullName evidence="1">Pdx2</fullName>
    </alternativeName>
    <alternativeName>
        <fullName evidence="1">Pyridoxal 5'-phosphate synthase glutaminase subunit</fullName>
        <ecNumber evidence="1">3.5.1.2</ecNumber>
    </alternativeName>
</protein>
<gene>
    <name evidence="1" type="primary">pdxT</name>
    <name type="ordered locus">NWMN_0482</name>
</gene>
<sequence>MKIGVLALQGAVREHIRHIELSGHEGIAVKKVEQLEEIEGLILPGGESTTLRRLMNLYGFKEALQNSTLPMFGTCAGLIVLAQDIVGEEGYLNKLNITVQRNSFGRQVDSFETELDIKGIATDIEGVFIRAPHIEKVGQGVDILCKVNEKIVAVQQGKYLGVSFHPELTDDYRVTDYFINHIVKKA</sequence>
<evidence type="ECO:0000255" key="1">
    <source>
        <dbReference type="HAMAP-Rule" id="MF_01615"/>
    </source>
</evidence>
<dbReference type="EC" id="4.3.3.6" evidence="1"/>
<dbReference type="EC" id="3.5.1.2" evidence="1"/>
<dbReference type="EMBL" id="AP009351">
    <property type="protein sequence ID" value="BAF66754.1"/>
    <property type="molecule type" value="Genomic_DNA"/>
</dbReference>
<dbReference type="RefSeq" id="WP_000690439.1">
    <property type="nucleotide sequence ID" value="NZ_JBBIAE010000002.1"/>
</dbReference>
<dbReference type="SMR" id="A6QEH2"/>
<dbReference type="MEROPS" id="C26.A32"/>
<dbReference type="KEGG" id="sae:NWMN_0482"/>
<dbReference type="HOGENOM" id="CLU_069674_2_0_9"/>
<dbReference type="UniPathway" id="UPA00245"/>
<dbReference type="Proteomes" id="UP000006386">
    <property type="component" value="Chromosome"/>
</dbReference>
<dbReference type="GO" id="GO:0005829">
    <property type="term" value="C:cytosol"/>
    <property type="evidence" value="ECO:0007669"/>
    <property type="project" value="TreeGrafter"/>
</dbReference>
<dbReference type="GO" id="GO:1903600">
    <property type="term" value="C:glutaminase complex"/>
    <property type="evidence" value="ECO:0007669"/>
    <property type="project" value="TreeGrafter"/>
</dbReference>
<dbReference type="GO" id="GO:0004359">
    <property type="term" value="F:glutaminase activity"/>
    <property type="evidence" value="ECO:0007669"/>
    <property type="project" value="UniProtKB-UniRule"/>
</dbReference>
<dbReference type="GO" id="GO:0036381">
    <property type="term" value="F:pyridoxal 5'-phosphate synthase (glutamine hydrolysing) activity"/>
    <property type="evidence" value="ECO:0007669"/>
    <property type="project" value="UniProtKB-UniRule"/>
</dbReference>
<dbReference type="GO" id="GO:0006543">
    <property type="term" value="P:glutamine catabolic process"/>
    <property type="evidence" value="ECO:0007669"/>
    <property type="project" value="UniProtKB-UniRule"/>
</dbReference>
<dbReference type="GO" id="GO:0042823">
    <property type="term" value="P:pyridoxal phosphate biosynthetic process"/>
    <property type="evidence" value="ECO:0007669"/>
    <property type="project" value="UniProtKB-UniRule"/>
</dbReference>
<dbReference type="GO" id="GO:0008614">
    <property type="term" value="P:pyridoxine metabolic process"/>
    <property type="evidence" value="ECO:0007669"/>
    <property type="project" value="TreeGrafter"/>
</dbReference>
<dbReference type="CDD" id="cd01749">
    <property type="entry name" value="GATase1_PB"/>
    <property type="match status" value="1"/>
</dbReference>
<dbReference type="FunFam" id="3.40.50.880:FF:000010">
    <property type="entry name" value="uncharacterized protein LOC100176842 isoform X2"/>
    <property type="match status" value="1"/>
</dbReference>
<dbReference type="Gene3D" id="3.40.50.880">
    <property type="match status" value="1"/>
</dbReference>
<dbReference type="HAMAP" id="MF_01615">
    <property type="entry name" value="PdxT"/>
    <property type="match status" value="1"/>
</dbReference>
<dbReference type="InterPro" id="IPR029062">
    <property type="entry name" value="Class_I_gatase-like"/>
</dbReference>
<dbReference type="InterPro" id="IPR002161">
    <property type="entry name" value="PdxT/SNO"/>
</dbReference>
<dbReference type="InterPro" id="IPR021196">
    <property type="entry name" value="PdxT/SNO_CS"/>
</dbReference>
<dbReference type="NCBIfam" id="TIGR03800">
    <property type="entry name" value="PLP_synth_Pdx2"/>
    <property type="match status" value="1"/>
</dbReference>
<dbReference type="PANTHER" id="PTHR31559">
    <property type="entry name" value="PYRIDOXAL 5'-PHOSPHATE SYNTHASE SUBUNIT SNO"/>
    <property type="match status" value="1"/>
</dbReference>
<dbReference type="PANTHER" id="PTHR31559:SF0">
    <property type="entry name" value="PYRIDOXAL 5'-PHOSPHATE SYNTHASE SUBUNIT SNO1-RELATED"/>
    <property type="match status" value="1"/>
</dbReference>
<dbReference type="Pfam" id="PF01174">
    <property type="entry name" value="SNO"/>
    <property type="match status" value="1"/>
</dbReference>
<dbReference type="PIRSF" id="PIRSF005639">
    <property type="entry name" value="Glut_amidoT_SNO"/>
    <property type="match status" value="1"/>
</dbReference>
<dbReference type="SUPFAM" id="SSF52317">
    <property type="entry name" value="Class I glutamine amidotransferase-like"/>
    <property type="match status" value="1"/>
</dbReference>
<dbReference type="PROSITE" id="PS01236">
    <property type="entry name" value="PDXT_SNO_1"/>
    <property type="match status" value="1"/>
</dbReference>
<dbReference type="PROSITE" id="PS51130">
    <property type="entry name" value="PDXT_SNO_2"/>
    <property type="match status" value="1"/>
</dbReference>
<accession>A6QEH2</accession>
<name>PDXT_STAAE</name>
<keyword id="KW-0315">Glutamine amidotransferase</keyword>
<keyword id="KW-0378">Hydrolase</keyword>
<keyword id="KW-0456">Lyase</keyword>
<keyword id="KW-0663">Pyridoxal phosphate</keyword>